<comment type="function">
    <text evidence="1">Binds to plexin family members and plays an important role in the regulation of developmental processes. Required for normal cardiovascular development during embryogenesis. Functions as attractant for growing axons, and thereby plays an important role in axon growth and axon guidance (By similarity).</text>
</comment>
<comment type="subunit">
    <text evidence="1">Interacts with PLXND1.</text>
</comment>
<comment type="subcellular location">
    <subcellularLocation>
        <location evidence="1">Secreted</location>
    </subcellularLocation>
</comment>
<comment type="similarity">
    <text evidence="5">Belongs to the semaphorin family.</text>
</comment>
<feature type="signal peptide" evidence="2">
    <location>
        <begin position="1"/>
        <end position="21"/>
    </location>
</feature>
<feature type="chain" id="PRO_0000345145" description="Semaphorin-3C">
    <location>
        <begin position="22"/>
        <end position="751"/>
    </location>
</feature>
<feature type="domain" description="Sema" evidence="3">
    <location>
        <begin position="28"/>
        <end position="511"/>
    </location>
</feature>
<feature type="domain" description="Ig-like C2-type">
    <location>
        <begin position="571"/>
        <end position="655"/>
    </location>
</feature>
<feature type="region of interest" description="Disordered" evidence="4">
    <location>
        <begin position="712"/>
        <end position="751"/>
    </location>
</feature>
<feature type="compositionally biased region" description="Basic and acidic residues" evidence="4">
    <location>
        <begin position="712"/>
        <end position="731"/>
    </location>
</feature>
<feature type="glycosylation site" description="N-linked (GlcNAc...) asparagine" evidence="2">
    <location>
        <position position="81"/>
    </location>
</feature>
<feature type="glycosylation site" description="N-linked (GlcNAc...) asparagine" evidence="2">
    <location>
        <position position="123"/>
    </location>
</feature>
<feature type="glycosylation site" description="N-linked (GlcNAc...) asparagine" evidence="2">
    <location>
        <position position="252"/>
    </location>
</feature>
<feature type="glycosylation site" description="N-linked (GlcNAc...) asparagine" evidence="2">
    <location>
        <position position="268"/>
    </location>
</feature>
<feature type="glycosylation site" description="N-linked (GlcNAc...) asparagine" evidence="2">
    <location>
        <position position="465"/>
    </location>
</feature>
<feature type="glycosylation site" description="N-linked (GlcNAc...) asparagine" evidence="2">
    <location>
        <position position="585"/>
    </location>
</feature>
<feature type="glycosylation site" description="N-linked (GlcNAc...) asparagine" evidence="2">
    <location>
        <position position="586"/>
    </location>
</feature>
<feature type="disulfide bond" evidence="1">
    <location>
        <begin position="101"/>
        <end position="112"/>
    </location>
</feature>
<feature type="disulfide bond" evidence="1">
    <location>
        <begin position="130"/>
        <end position="139"/>
    </location>
</feature>
<feature type="disulfide bond" evidence="1">
    <location>
        <begin position="266"/>
        <end position="378"/>
    </location>
</feature>
<feature type="disulfide bond" evidence="1">
    <location>
        <begin position="290"/>
        <end position="338"/>
    </location>
</feature>
<feature type="disulfide bond" evidence="1">
    <location>
        <begin position="514"/>
        <end position="532"/>
    </location>
</feature>
<feature type="disulfide bond" evidence="1">
    <location>
        <begin position="592"/>
        <end position="643"/>
    </location>
</feature>
<protein>
    <recommendedName>
        <fullName>Semaphorin-3C</fullName>
    </recommendedName>
</protein>
<proteinExistence type="evidence at transcript level"/>
<keyword id="KW-0217">Developmental protein</keyword>
<keyword id="KW-0221">Differentiation</keyword>
<keyword id="KW-1015">Disulfide bond</keyword>
<keyword id="KW-0325">Glycoprotein</keyword>
<keyword id="KW-0393">Immunoglobulin domain</keyword>
<keyword id="KW-0524">Neurogenesis</keyword>
<keyword id="KW-1185">Reference proteome</keyword>
<keyword id="KW-0964">Secreted</keyword>
<keyword id="KW-0732">Signal</keyword>
<reference key="1">
    <citation type="submission" date="2004-11" db="EMBL/GenBank/DDBJ databases">
        <authorList>
            <consortium name="The German cDNA consortium"/>
        </authorList>
    </citation>
    <scope>NUCLEOTIDE SEQUENCE [LARGE SCALE MRNA]</scope>
    <source>
        <tissue>Kidney</tissue>
    </source>
</reference>
<organism>
    <name type="scientific">Pongo abelii</name>
    <name type="common">Sumatran orangutan</name>
    <name type="synonym">Pongo pygmaeus abelii</name>
    <dbReference type="NCBI Taxonomy" id="9601"/>
    <lineage>
        <taxon>Eukaryota</taxon>
        <taxon>Metazoa</taxon>
        <taxon>Chordata</taxon>
        <taxon>Craniata</taxon>
        <taxon>Vertebrata</taxon>
        <taxon>Euteleostomi</taxon>
        <taxon>Mammalia</taxon>
        <taxon>Eutheria</taxon>
        <taxon>Euarchontoglires</taxon>
        <taxon>Primates</taxon>
        <taxon>Haplorrhini</taxon>
        <taxon>Catarrhini</taxon>
        <taxon>Hominidae</taxon>
        <taxon>Pongo</taxon>
    </lineage>
</organism>
<name>SEM3C_PONAB</name>
<sequence>MAFRTICVLVGVFICSICVKGSSQPQARVYLTFDELRETKTSEYFSLSHHPLDYRILLMDEDQDRIYVGSKDHILSLNINNISQEPLSVFWPASTIKVEECKMAGKDPTHGCGNFVRVIQTFNRTHLYVCGSGAFSPVCTYLNRGRRSEDQVFMIDSKCESGKGRCSFNPNVNTVSVMINEELFSGMYIDFMGTDAAIFRSLTKRNAVRTDQHNSKWLSEPMFVDAHVIPDGTDPNDAKVYFFFKEKLTDNNRSTKQIHSMIARICPNDTGGLRSLVNKWTTFLKARLVCSVTDEDGPETHFDELEDVFLLETDNPRTTLVYGIFTTSSSVFKGSAVCVYHLSDIQTVFNGPFAHKEGPNHQLISYQGRIPYPRPGTCPGGAFTPNMRTTKEFPDDVVTFIRNHPLMYNSIYPVHKRPLIVRIGTDYKYTKIAVDRVNAADGRYHVLFLGTDRGTVQKVVVLPTNSSVSGELILEELEVFKNHAPITTMKISSKKQQLYVSSNEGVSQVSLHRCHIYGTACADCCLARDPYCAWDGHSCSRFYPTGKRRSRRQDVRHGNPLTQCRGFNLKAYRNAAEIVQYGVKNNTTFLECAPKSPQASIKWLLQKDKDRRKEVKLNERIIATSQGLLIRSVQGSDQGLYHCIATENSFKQTIAKINFKVLDSEMVAVVTDKWSPWTWASSVRALPFHPKDIMGAFSHSEMQMINQYCKDTRQQHQQGDESQKMRGDYGKLKALINSRKSRNRRNQLPES</sequence>
<gene>
    <name type="primary">SEMA3C</name>
</gene>
<accession>Q5RE75</accession>
<dbReference type="EMBL" id="CR857661">
    <property type="protein sequence ID" value="CAH89932.1"/>
    <property type="molecule type" value="mRNA"/>
</dbReference>
<dbReference type="RefSeq" id="NP_001124906.1">
    <property type="nucleotide sequence ID" value="NM_001131434.2"/>
</dbReference>
<dbReference type="SMR" id="Q5RE75"/>
<dbReference type="FunCoup" id="Q5RE75">
    <property type="interactions" value="362"/>
</dbReference>
<dbReference type="STRING" id="9601.ENSPPYP00000020016"/>
<dbReference type="GlyCosmos" id="Q5RE75">
    <property type="glycosylation" value="7 sites, No reported glycans"/>
</dbReference>
<dbReference type="Ensembl" id="ENSPPYT00000020806.3">
    <property type="protein sequence ID" value="ENSPPYP00000020016.3"/>
    <property type="gene ID" value="ENSPPYG00000017861.3"/>
</dbReference>
<dbReference type="GeneID" id="100171774"/>
<dbReference type="KEGG" id="pon:100171774"/>
<dbReference type="CTD" id="10512"/>
<dbReference type="eggNOG" id="KOG3611">
    <property type="taxonomic scope" value="Eukaryota"/>
</dbReference>
<dbReference type="GeneTree" id="ENSGT00940000159379"/>
<dbReference type="InParanoid" id="Q5RE75"/>
<dbReference type="OMA" id="AMYIDFM"/>
<dbReference type="OrthoDB" id="9988752at2759"/>
<dbReference type="Proteomes" id="UP000001595">
    <property type="component" value="Chromosome 7"/>
</dbReference>
<dbReference type="GO" id="GO:0005615">
    <property type="term" value="C:extracellular space"/>
    <property type="evidence" value="ECO:0007669"/>
    <property type="project" value="Ensembl"/>
</dbReference>
<dbReference type="GO" id="GO:0005886">
    <property type="term" value="C:plasma membrane"/>
    <property type="evidence" value="ECO:0007669"/>
    <property type="project" value="TreeGrafter"/>
</dbReference>
<dbReference type="GO" id="GO:0045499">
    <property type="term" value="F:chemorepellent activity"/>
    <property type="evidence" value="ECO:0007669"/>
    <property type="project" value="TreeGrafter"/>
</dbReference>
<dbReference type="GO" id="GO:0030215">
    <property type="term" value="F:semaphorin receptor binding"/>
    <property type="evidence" value="ECO:0007669"/>
    <property type="project" value="Ensembl"/>
</dbReference>
<dbReference type="GO" id="GO:0007411">
    <property type="term" value="P:axon guidance"/>
    <property type="evidence" value="ECO:0000250"/>
    <property type="project" value="UniProtKB"/>
</dbReference>
<dbReference type="GO" id="GO:0001974">
    <property type="term" value="P:blood vessel remodeling"/>
    <property type="evidence" value="ECO:0007669"/>
    <property type="project" value="Ensembl"/>
</dbReference>
<dbReference type="GO" id="GO:0140074">
    <property type="term" value="P:cardiac endothelial to mesenchymal transition"/>
    <property type="evidence" value="ECO:0007669"/>
    <property type="project" value="Ensembl"/>
</dbReference>
<dbReference type="GO" id="GO:0003215">
    <property type="term" value="P:cardiac right ventricle morphogenesis"/>
    <property type="evidence" value="ECO:0007669"/>
    <property type="project" value="Ensembl"/>
</dbReference>
<dbReference type="GO" id="GO:0060666">
    <property type="term" value="P:dichotomous subdivision of terminal units involved in salivary gland branching"/>
    <property type="evidence" value="ECO:0007669"/>
    <property type="project" value="Ensembl"/>
</dbReference>
<dbReference type="GO" id="GO:0060174">
    <property type="term" value="P:limb bud formation"/>
    <property type="evidence" value="ECO:0007669"/>
    <property type="project" value="Ensembl"/>
</dbReference>
<dbReference type="GO" id="GO:0001755">
    <property type="term" value="P:neural crest cell migration"/>
    <property type="evidence" value="ECO:0007669"/>
    <property type="project" value="Ensembl"/>
</dbReference>
<dbReference type="GO" id="GO:0021915">
    <property type="term" value="P:neural tube development"/>
    <property type="evidence" value="ECO:0007669"/>
    <property type="project" value="Ensembl"/>
</dbReference>
<dbReference type="GO" id="GO:0003148">
    <property type="term" value="P:outflow tract septum morphogenesis"/>
    <property type="evidence" value="ECO:0007669"/>
    <property type="project" value="Ensembl"/>
</dbReference>
<dbReference type="GO" id="GO:1905312">
    <property type="term" value="P:positive regulation of cardiac neural crest cell migration involved in outflow tract morphogenesis"/>
    <property type="evidence" value="ECO:0007669"/>
    <property type="project" value="Ensembl"/>
</dbReference>
<dbReference type="GO" id="GO:0009791">
    <property type="term" value="P:post-embryonic development"/>
    <property type="evidence" value="ECO:0007669"/>
    <property type="project" value="Ensembl"/>
</dbReference>
<dbReference type="GO" id="GO:0003350">
    <property type="term" value="P:pulmonary myocardium development"/>
    <property type="evidence" value="ECO:0007669"/>
    <property type="project" value="Ensembl"/>
</dbReference>
<dbReference type="GO" id="GO:0071526">
    <property type="term" value="P:semaphorin-plexin signaling pathway"/>
    <property type="evidence" value="ECO:0007669"/>
    <property type="project" value="Ensembl"/>
</dbReference>
<dbReference type="GO" id="GO:0001756">
    <property type="term" value="P:somitogenesis"/>
    <property type="evidence" value="ECO:0007669"/>
    <property type="project" value="Ensembl"/>
</dbReference>
<dbReference type="CDD" id="cd05871">
    <property type="entry name" value="Ig_Sema3"/>
    <property type="match status" value="1"/>
</dbReference>
<dbReference type="CDD" id="cd11251">
    <property type="entry name" value="Sema_3C"/>
    <property type="match status" value="1"/>
</dbReference>
<dbReference type="FunFam" id="2.130.10.10:FF:000123">
    <property type="entry name" value="Semaphorin 3C"/>
    <property type="match status" value="1"/>
</dbReference>
<dbReference type="FunFam" id="2.60.40.10:FF:000030">
    <property type="entry name" value="Semaphorin 3F like"/>
    <property type="match status" value="1"/>
</dbReference>
<dbReference type="FunFam" id="3.30.1680.10:FF:000001">
    <property type="entry name" value="Semaphorin 3F like"/>
    <property type="match status" value="1"/>
</dbReference>
<dbReference type="Gene3D" id="2.60.40.10">
    <property type="entry name" value="Immunoglobulins"/>
    <property type="match status" value="1"/>
</dbReference>
<dbReference type="Gene3D" id="3.30.1680.10">
    <property type="entry name" value="ligand-binding face of the semaphorins, domain 2"/>
    <property type="match status" value="1"/>
</dbReference>
<dbReference type="Gene3D" id="2.130.10.10">
    <property type="entry name" value="YVTN repeat-like/Quinoprotein amine dehydrogenase"/>
    <property type="match status" value="1"/>
</dbReference>
<dbReference type="InterPro" id="IPR007110">
    <property type="entry name" value="Ig-like_dom"/>
</dbReference>
<dbReference type="InterPro" id="IPR036179">
    <property type="entry name" value="Ig-like_dom_sf"/>
</dbReference>
<dbReference type="InterPro" id="IPR013783">
    <property type="entry name" value="Ig-like_fold"/>
</dbReference>
<dbReference type="InterPro" id="IPR013098">
    <property type="entry name" value="Ig_I-set"/>
</dbReference>
<dbReference type="InterPro" id="IPR003599">
    <property type="entry name" value="Ig_sub"/>
</dbReference>
<dbReference type="InterPro" id="IPR016201">
    <property type="entry name" value="PSI"/>
</dbReference>
<dbReference type="InterPro" id="IPR001627">
    <property type="entry name" value="Semap_dom"/>
</dbReference>
<dbReference type="InterPro" id="IPR036352">
    <property type="entry name" value="Semap_dom_sf"/>
</dbReference>
<dbReference type="InterPro" id="IPR027231">
    <property type="entry name" value="Semaphorin"/>
</dbReference>
<dbReference type="InterPro" id="IPR015943">
    <property type="entry name" value="WD40/YVTN_repeat-like_dom_sf"/>
</dbReference>
<dbReference type="PANTHER" id="PTHR11036">
    <property type="entry name" value="SEMAPHORIN"/>
    <property type="match status" value="1"/>
</dbReference>
<dbReference type="PANTHER" id="PTHR11036:SF25">
    <property type="entry name" value="SEMAPHORIN-3C"/>
    <property type="match status" value="1"/>
</dbReference>
<dbReference type="Pfam" id="PF07679">
    <property type="entry name" value="I-set"/>
    <property type="match status" value="1"/>
</dbReference>
<dbReference type="Pfam" id="PF01403">
    <property type="entry name" value="Sema"/>
    <property type="match status" value="1"/>
</dbReference>
<dbReference type="SMART" id="SM00409">
    <property type="entry name" value="IG"/>
    <property type="match status" value="1"/>
</dbReference>
<dbReference type="SMART" id="SM00423">
    <property type="entry name" value="PSI"/>
    <property type="match status" value="1"/>
</dbReference>
<dbReference type="SMART" id="SM00630">
    <property type="entry name" value="Sema"/>
    <property type="match status" value="1"/>
</dbReference>
<dbReference type="SUPFAM" id="SSF48726">
    <property type="entry name" value="Immunoglobulin"/>
    <property type="match status" value="1"/>
</dbReference>
<dbReference type="SUPFAM" id="SSF103575">
    <property type="entry name" value="Plexin repeat"/>
    <property type="match status" value="1"/>
</dbReference>
<dbReference type="SUPFAM" id="SSF101912">
    <property type="entry name" value="Sema domain"/>
    <property type="match status" value="1"/>
</dbReference>
<dbReference type="PROSITE" id="PS50835">
    <property type="entry name" value="IG_LIKE"/>
    <property type="match status" value="1"/>
</dbReference>
<dbReference type="PROSITE" id="PS51004">
    <property type="entry name" value="SEMA"/>
    <property type="match status" value="1"/>
</dbReference>
<evidence type="ECO:0000250" key="1"/>
<evidence type="ECO:0000255" key="2"/>
<evidence type="ECO:0000255" key="3">
    <source>
        <dbReference type="PROSITE-ProRule" id="PRU00352"/>
    </source>
</evidence>
<evidence type="ECO:0000256" key="4">
    <source>
        <dbReference type="SAM" id="MobiDB-lite"/>
    </source>
</evidence>
<evidence type="ECO:0000305" key="5"/>